<gene>
    <name evidence="1" type="primary">mutL</name>
    <name type="ordered locus">BUAP5A_563</name>
</gene>
<evidence type="ECO:0000255" key="1">
    <source>
        <dbReference type="HAMAP-Rule" id="MF_00149"/>
    </source>
</evidence>
<feature type="chain" id="PRO_1000192164" description="DNA mismatch repair protein MutL">
    <location>
        <begin position="1"/>
        <end position="584"/>
    </location>
</feature>
<proteinExistence type="inferred from homology"/>
<accession>B8D8D4</accession>
<comment type="function">
    <text evidence="1">This protein is involved in the repair of mismatches in DNA. It is required for dam-dependent methyl-directed DNA mismatch repair. May act as a 'molecular matchmaker', a protein that promotes the formation of a stable complex between two or more DNA-binding proteins in an ATP-dependent manner without itself being part of a final effector complex.</text>
</comment>
<comment type="similarity">
    <text evidence="1">Belongs to the DNA mismatch repair MutL/HexB family.</text>
</comment>
<reference key="1">
    <citation type="journal article" date="2009" name="Science">
        <title>The dynamics and time scale of ongoing genomic erosion in symbiotic bacteria.</title>
        <authorList>
            <person name="Moran N.A."/>
            <person name="McLaughlin H.J."/>
            <person name="Sorek R."/>
        </authorList>
    </citation>
    <scope>NUCLEOTIDE SEQUENCE [LARGE SCALE GENOMIC DNA]</scope>
    <source>
        <strain>5A</strain>
    </source>
</reference>
<dbReference type="EMBL" id="CP001161">
    <property type="protein sequence ID" value="ACL30910.1"/>
    <property type="molecule type" value="Genomic_DNA"/>
</dbReference>
<dbReference type="RefSeq" id="WP_009874518.1">
    <property type="nucleotide sequence ID" value="NC_011833.1"/>
</dbReference>
<dbReference type="SMR" id="B8D8D4"/>
<dbReference type="KEGG" id="bap:BUAP5A_563"/>
<dbReference type="HOGENOM" id="CLU_004131_5_1_6"/>
<dbReference type="OrthoDB" id="9763467at2"/>
<dbReference type="Proteomes" id="UP000006904">
    <property type="component" value="Chromosome"/>
</dbReference>
<dbReference type="GO" id="GO:0032300">
    <property type="term" value="C:mismatch repair complex"/>
    <property type="evidence" value="ECO:0007669"/>
    <property type="project" value="InterPro"/>
</dbReference>
<dbReference type="GO" id="GO:0005524">
    <property type="term" value="F:ATP binding"/>
    <property type="evidence" value="ECO:0007669"/>
    <property type="project" value="InterPro"/>
</dbReference>
<dbReference type="GO" id="GO:0016887">
    <property type="term" value="F:ATP hydrolysis activity"/>
    <property type="evidence" value="ECO:0007669"/>
    <property type="project" value="InterPro"/>
</dbReference>
<dbReference type="GO" id="GO:0140664">
    <property type="term" value="F:ATP-dependent DNA damage sensor activity"/>
    <property type="evidence" value="ECO:0007669"/>
    <property type="project" value="InterPro"/>
</dbReference>
<dbReference type="GO" id="GO:0030983">
    <property type="term" value="F:mismatched DNA binding"/>
    <property type="evidence" value="ECO:0007669"/>
    <property type="project" value="InterPro"/>
</dbReference>
<dbReference type="GO" id="GO:0006298">
    <property type="term" value="P:mismatch repair"/>
    <property type="evidence" value="ECO:0007669"/>
    <property type="project" value="UniProtKB-UniRule"/>
</dbReference>
<dbReference type="CDD" id="cd16926">
    <property type="entry name" value="HATPase_MutL-MLH-PMS-like"/>
    <property type="match status" value="1"/>
</dbReference>
<dbReference type="CDD" id="cd03482">
    <property type="entry name" value="MutL_Trans_MutL"/>
    <property type="match status" value="1"/>
</dbReference>
<dbReference type="FunFam" id="3.30.565.10:FF:000003">
    <property type="entry name" value="DNA mismatch repair endonuclease MutL"/>
    <property type="match status" value="1"/>
</dbReference>
<dbReference type="Gene3D" id="3.30.230.10">
    <property type="match status" value="1"/>
</dbReference>
<dbReference type="Gene3D" id="3.30.565.10">
    <property type="entry name" value="Histidine kinase-like ATPase, C-terminal domain"/>
    <property type="match status" value="1"/>
</dbReference>
<dbReference type="Gene3D" id="3.30.1540.20">
    <property type="entry name" value="MutL, C-terminal domain, dimerisation subdomain"/>
    <property type="match status" value="1"/>
</dbReference>
<dbReference type="Gene3D" id="3.30.1370.100">
    <property type="entry name" value="MutL, C-terminal domain, regulatory subdomain"/>
    <property type="match status" value="1"/>
</dbReference>
<dbReference type="HAMAP" id="MF_00149">
    <property type="entry name" value="DNA_mis_repair"/>
    <property type="match status" value="1"/>
</dbReference>
<dbReference type="InterPro" id="IPR014762">
    <property type="entry name" value="DNA_mismatch_repair_CS"/>
</dbReference>
<dbReference type="InterPro" id="IPR020667">
    <property type="entry name" value="DNA_mismatch_repair_MutL"/>
</dbReference>
<dbReference type="InterPro" id="IPR013507">
    <property type="entry name" value="DNA_mismatch_S5_2-like"/>
</dbReference>
<dbReference type="InterPro" id="IPR036890">
    <property type="entry name" value="HATPase_C_sf"/>
</dbReference>
<dbReference type="InterPro" id="IPR002099">
    <property type="entry name" value="MutL/Mlh/PMS"/>
</dbReference>
<dbReference type="InterPro" id="IPR038973">
    <property type="entry name" value="MutL/Mlh/Pms-like"/>
</dbReference>
<dbReference type="InterPro" id="IPR014790">
    <property type="entry name" value="MutL_C"/>
</dbReference>
<dbReference type="InterPro" id="IPR042120">
    <property type="entry name" value="MutL_C_dimsub"/>
</dbReference>
<dbReference type="InterPro" id="IPR042121">
    <property type="entry name" value="MutL_C_regsub"/>
</dbReference>
<dbReference type="InterPro" id="IPR037198">
    <property type="entry name" value="MutL_C_sf"/>
</dbReference>
<dbReference type="InterPro" id="IPR020568">
    <property type="entry name" value="Ribosomal_Su5_D2-typ_SF"/>
</dbReference>
<dbReference type="InterPro" id="IPR014721">
    <property type="entry name" value="Ribsml_uS5_D2-typ_fold_subgr"/>
</dbReference>
<dbReference type="NCBIfam" id="TIGR00585">
    <property type="entry name" value="mutl"/>
    <property type="match status" value="1"/>
</dbReference>
<dbReference type="PANTHER" id="PTHR10073">
    <property type="entry name" value="DNA MISMATCH REPAIR PROTEIN MLH, PMS, MUTL"/>
    <property type="match status" value="1"/>
</dbReference>
<dbReference type="PANTHER" id="PTHR10073:SF12">
    <property type="entry name" value="DNA MISMATCH REPAIR PROTEIN MLH1"/>
    <property type="match status" value="1"/>
</dbReference>
<dbReference type="Pfam" id="PF01119">
    <property type="entry name" value="DNA_mis_repair"/>
    <property type="match status" value="1"/>
</dbReference>
<dbReference type="Pfam" id="PF13589">
    <property type="entry name" value="HATPase_c_3"/>
    <property type="match status" value="1"/>
</dbReference>
<dbReference type="Pfam" id="PF08676">
    <property type="entry name" value="MutL_C"/>
    <property type="match status" value="1"/>
</dbReference>
<dbReference type="SMART" id="SM01340">
    <property type="entry name" value="DNA_mis_repair"/>
    <property type="match status" value="1"/>
</dbReference>
<dbReference type="SUPFAM" id="SSF55874">
    <property type="entry name" value="ATPase domain of HSP90 chaperone/DNA topoisomerase II/histidine kinase"/>
    <property type="match status" value="1"/>
</dbReference>
<dbReference type="SUPFAM" id="SSF118116">
    <property type="entry name" value="DNA mismatch repair protein MutL"/>
    <property type="match status" value="1"/>
</dbReference>
<dbReference type="SUPFAM" id="SSF54211">
    <property type="entry name" value="Ribosomal protein S5 domain 2-like"/>
    <property type="match status" value="1"/>
</dbReference>
<dbReference type="PROSITE" id="PS00058">
    <property type="entry name" value="DNA_MISMATCH_REPAIR_1"/>
    <property type="match status" value="1"/>
</dbReference>
<sequence>MPIRILPSDLSSQISAGEIIERPASVVKEIIENSIDAGSKNINIIVENSGFQSIILKDDGCGIDKKDLLLAVCHHATSKINSLSDLDKLTTFGFRGEALASIRAVSRLTLISCTRFNDVAAKIYLEGFCSKNIILQPIAHPEGTTIIVDNLFYNIPVRLKFLKNKKLEFSKICEVVKKIALSHFYINFSLKHNNKLITQYNSINNRKNKINRLKDIFDTLDTSEFLEIKEKKYRMVLFGWISHPYNFKKIKNIQYCYVNNRYLYNNIFVNAVRAAYSKIEQKKNISFVLYLTIESFNIDINIHPTKNEIKFHNPDVVYTFIYEAVFSYLKKIKEKYYFNFSCKKQTQLNKEKEFYFYDSDPTFLTLISSIFFKKKQIFKNIKNKIKHNNFISKSTPLEKYESSIGRLLIIIHKYYGLIYHDNNFLLLSFPVAKGIVRKQKLKNNIQKENIIEYFLSNIKINLTSQEYLILFNKKEILSKFGFHLIFKKKYVILSSIPAFLKKCNFHIIISNFFAFLFLKKQVFISDIVDWFYINVFIELKNWTYIRGIEVLLEIEYYCPLLLINPPSKLLQKININAALCILKI</sequence>
<name>MUTL_BUCA5</name>
<organism>
    <name type="scientific">Buchnera aphidicola subsp. Acyrthosiphon pisum (strain 5A)</name>
    <dbReference type="NCBI Taxonomy" id="563178"/>
    <lineage>
        <taxon>Bacteria</taxon>
        <taxon>Pseudomonadati</taxon>
        <taxon>Pseudomonadota</taxon>
        <taxon>Gammaproteobacteria</taxon>
        <taxon>Enterobacterales</taxon>
        <taxon>Erwiniaceae</taxon>
        <taxon>Buchnera</taxon>
    </lineage>
</organism>
<keyword id="KW-0227">DNA damage</keyword>
<keyword id="KW-0234">DNA repair</keyword>
<protein>
    <recommendedName>
        <fullName evidence="1">DNA mismatch repair protein MutL</fullName>
    </recommendedName>
</protein>